<organism>
    <name type="scientific">Azorhizobium caulinodans (strain ATCC 43989 / DSM 5975 / JCM 20966 / LMG 6465 / NBRC 14845 / NCIMB 13405 / ORS 571)</name>
    <dbReference type="NCBI Taxonomy" id="438753"/>
    <lineage>
        <taxon>Bacteria</taxon>
        <taxon>Pseudomonadati</taxon>
        <taxon>Pseudomonadota</taxon>
        <taxon>Alphaproteobacteria</taxon>
        <taxon>Hyphomicrobiales</taxon>
        <taxon>Xanthobacteraceae</taxon>
        <taxon>Azorhizobium</taxon>
    </lineage>
</organism>
<accession>A8HRT6</accession>
<evidence type="ECO:0000255" key="1">
    <source>
        <dbReference type="HAMAP-Rule" id="MF_00539"/>
    </source>
</evidence>
<evidence type="ECO:0000256" key="2">
    <source>
        <dbReference type="SAM" id="MobiDB-lite"/>
    </source>
</evidence>
<evidence type="ECO:0000305" key="3"/>
<gene>
    <name evidence="1" type="primary">rpmA</name>
    <name type="ordered locus">AZC_4093</name>
</gene>
<sequence length="89" mass="9591">MAHKKAGGSSRNGRDSDGRRLGVKKFGGQAVVSGNIIVRQRGTKWHPGTNVGMGKDHTLFALVEGRVEFRTKANDRTYVSVVPALEAAE</sequence>
<feature type="chain" id="PRO_1000072542" description="Large ribosomal subunit protein bL27">
    <location>
        <begin position="1"/>
        <end position="89"/>
    </location>
</feature>
<feature type="region of interest" description="Disordered" evidence="2">
    <location>
        <begin position="1"/>
        <end position="24"/>
    </location>
</feature>
<reference key="1">
    <citation type="submission" date="2007-04" db="EMBL/GenBank/DDBJ databases">
        <title>Complete genome sequence of the nitrogen-fixing bacterium Azorhizobium caulinodans ORS571.</title>
        <authorList>
            <person name="Lee K.B."/>
            <person name="Backer P.D."/>
            <person name="Aono T."/>
            <person name="Liu C.T."/>
            <person name="Suzuki S."/>
            <person name="Suzuki T."/>
            <person name="Kaneko T."/>
            <person name="Yamada M."/>
            <person name="Tabata S."/>
            <person name="Kupfer D.M."/>
            <person name="Najar F.Z."/>
            <person name="Wiley G.B."/>
            <person name="Roe B."/>
            <person name="Binnewies T."/>
            <person name="Ussery D."/>
            <person name="Vereecke D."/>
            <person name="Gevers D."/>
            <person name="Holsters M."/>
            <person name="Oyaizu H."/>
        </authorList>
    </citation>
    <scope>NUCLEOTIDE SEQUENCE [LARGE SCALE GENOMIC DNA]</scope>
    <source>
        <strain>ATCC 43989 / DSM 5975 / JCM 20966 / LMG 6465 / NBRC 14845 / NCIMB 13405 / ORS 571</strain>
    </source>
</reference>
<dbReference type="EMBL" id="AP009384">
    <property type="protein sequence ID" value="BAF90091.1"/>
    <property type="molecule type" value="Genomic_DNA"/>
</dbReference>
<dbReference type="RefSeq" id="WP_012172613.1">
    <property type="nucleotide sequence ID" value="NC_009937.1"/>
</dbReference>
<dbReference type="SMR" id="A8HRT6"/>
<dbReference type="STRING" id="438753.AZC_4093"/>
<dbReference type="KEGG" id="azc:AZC_4093"/>
<dbReference type="eggNOG" id="COG0211">
    <property type="taxonomic scope" value="Bacteria"/>
</dbReference>
<dbReference type="HOGENOM" id="CLU_095424_4_1_5"/>
<dbReference type="Proteomes" id="UP000000270">
    <property type="component" value="Chromosome"/>
</dbReference>
<dbReference type="GO" id="GO:0022625">
    <property type="term" value="C:cytosolic large ribosomal subunit"/>
    <property type="evidence" value="ECO:0007669"/>
    <property type="project" value="TreeGrafter"/>
</dbReference>
<dbReference type="GO" id="GO:0003735">
    <property type="term" value="F:structural constituent of ribosome"/>
    <property type="evidence" value="ECO:0007669"/>
    <property type="project" value="InterPro"/>
</dbReference>
<dbReference type="GO" id="GO:0006412">
    <property type="term" value="P:translation"/>
    <property type="evidence" value="ECO:0007669"/>
    <property type="project" value="UniProtKB-UniRule"/>
</dbReference>
<dbReference type="FunFam" id="2.40.50.100:FF:000020">
    <property type="entry name" value="50S ribosomal protein L27"/>
    <property type="match status" value="1"/>
</dbReference>
<dbReference type="Gene3D" id="2.40.50.100">
    <property type="match status" value="1"/>
</dbReference>
<dbReference type="HAMAP" id="MF_00539">
    <property type="entry name" value="Ribosomal_bL27"/>
    <property type="match status" value="1"/>
</dbReference>
<dbReference type="InterPro" id="IPR001684">
    <property type="entry name" value="Ribosomal_bL27"/>
</dbReference>
<dbReference type="InterPro" id="IPR018261">
    <property type="entry name" value="Ribosomal_bL27_CS"/>
</dbReference>
<dbReference type="NCBIfam" id="TIGR00062">
    <property type="entry name" value="L27"/>
    <property type="match status" value="1"/>
</dbReference>
<dbReference type="PANTHER" id="PTHR15893:SF0">
    <property type="entry name" value="LARGE RIBOSOMAL SUBUNIT PROTEIN BL27M"/>
    <property type="match status" value="1"/>
</dbReference>
<dbReference type="PANTHER" id="PTHR15893">
    <property type="entry name" value="RIBOSOMAL PROTEIN L27"/>
    <property type="match status" value="1"/>
</dbReference>
<dbReference type="Pfam" id="PF01016">
    <property type="entry name" value="Ribosomal_L27"/>
    <property type="match status" value="1"/>
</dbReference>
<dbReference type="PRINTS" id="PR00063">
    <property type="entry name" value="RIBOSOMALL27"/>
</dbReference>
<dbReference type="SUPFAM" id="SSF110324">
    <property type="entry name" value="Ribosomal L27 protein-like"/>
    <property type="match status" value="1"/>
</dbReference>
<dbReference type="PROSITE" id="PS00831">
    <property type="entry name" value="RIBOSOMAL_L27"/>
    <property type="match status" value="1"/>
</dbReference>
<comment type="similarity">
    <text evidence="1">Belongs to the bacterial ribosomal protein bL27 family.</text>
</comment>
<proteinExistence type="inferred from homology"/>
<protein>
    <recommendedName>
        <fullName evidence="1">Large ribosomal subunit protein bL27</fullName>
    </recommendedName>
    <alternativeName>
        <fullName evidence="3">50S ribosomal protein L27</fullName>
    </alternativeName>
</protein>
<keyword id="KW-1185">Reference proteome</keyword>
<keyword id="KW-0687">Ribonucleoprotein</keyword>
<keyword id="KW-0689">Ribosomal protein</keyword>
<name>RL27_AZOC5</name>